<comment type="function">
    <molecule>Replicase large subunit</molecule>
    <text>Is an RNA-dependent RNA polymerase active in viral RNA replication.</text>
</comment>
<comment type="function">
    <molecule>Replicase small subunit</molecule>
    <text evidence="1 5">Is a methyltransferase active in RNA capping and an RNA helicase. Methyltransferase displays a cytoplasmic capping enzyme activity. This function is necessary since all viral RNAs are synthesized in the cytoplasm, and host capping enzymes are restricted to the nucleus. Helicase region probably exhibits NTPase and RNA unwinding activities (Potential). It also acts as a suppressor of RNA-mediated gene silencing, also known as post-transcriptional gene silencing (PTGS), a mechanism of plant viral defense that limits the accumulation of viral RNAs. May mediate silencing suppression through either inhibition of HEN1-mediated siRNA or siRNA demethylation (By similarity).</text>
</comment>
<comment type="catalytic activity">
    <reaction evidence="3">
        <text>RNA(n) + a ribonucleoside 5'-triphosphate = RNA(n+1) + diphosphate</text>
        <dbReference type="Rhea" id="RHEA:21248"/>
        <dbReference type="Rhea" id="RHEA-COMP:14527"/>
        <dbReference type="Rhea" id="RHEA-COMP:17342"/>
        <dbReference type="ChEBI" id="CHEBI:33019"/>
        <dbReference type="ChEBI" id="CHEBI:61557"/>
        <dbReference type="ChEBI" id="CHEBI:140395"/>
        <dbReference type="EC" id="2.7.7.48"/>
    </reaction>
</comment>
<comment type="catalytic activity">
    <reaction>
        <text>ATP + H2O = ADP + phosphate + H(+)</text>
        <dbReference type="Rhea" id="RHEA:13065"/>
        <dbReference type="ChEBI" id="CHEBI:15377"/>
        <dbReference type="ChEBI" id="CHEBI:15378"/>
        <dbReference type="ChEBI" id="CHEBI:30616"/>
        <dbReference type="ChEBI" id="CHEBI:43474"/>
        <dbReference type="ChEBI" id="CHEBI:456216"/>
        <dbReference type="EC" id="3.6.4.13"/>
    </reaction>
</comment>
<comment type="subunit">
    <text evidence="1">Heterodimer of a large and a small subunit.</text>
</comment>
<comment type="miscellaneous">
    <text>This protein is translated as a fusion protein by episodic readthrough of a termination codon. When readthrough of the terminator codon TGA occurs between the codons for Leu-1112 and Gln-1114, this results in the addition of the RdRp region to the replicase.</text>
</comment>
<comment type="similarity">
    <text evidence="5">Belongs to the ssRNA positive-strand viruses RNA-directed RNA polymerase family.</text>
</comment>
<comment type="sequence caution" evidence="5">
    <conflict type="erroneous initiation">
        <sequence resource="EMBL-CDS" id="AAB49498"/>
    </conflict>
    <text>Truncated N-terminus.</text>
</comment>
<organismHost>
    <name type="scientific">Cymbidium</name>
    <dbReference type="NCBI Taxonomy" id="14366"/>
</organismHost>
<organismHost>
    <name type="scientific">Odontoglossum</name>
    <dbReference type="NCBI Taxonomy" id="154697"/>
</organismHost>
<dbReference type="EC" id="2.1.1.-"/>
<dbReference type="EC" id="2.7.7.-"/>
<dbReference type="EC" id="2.7.7.48"/>
<dbReference type="EC" id="3.6.4.13"/>
<dbReference type="EMBL" id="D13941">
    <property type="protein sequence ID" value="BAA21828.1"/>
    <property type="molecule type" value="Genomic_RNA"/>
</dbReference>
<dbReference type="EMBL" id="S83257">
    <property type="protein sequence ID" value="AAB49498.2"/>
    <property type="status" value="ALT_INIT"/>
    <property type="molecule type" value="Genomic_RNA"/>
</dbReference>
<dbReference type="Proteomes" id="UP000007788">
    <property type="component" value="Genome"/>
</dbReference>
<dbReference type="GO" id="GO:0005524">
    <property type="term" value="F:ATP binding"/>
    <property type="evidence" value="ECO:0007669"/>
    <property type="project" value="UniProtKB-KW"/>
</dbReference>
<dbReference type="GO" id="GO:0016887">
    <property type="term" value="F:ATP hydrolysis activity"/>
    <property type="evidence" value="ECO:0007669"/>
    <property type="project" value="RHEA"/>
</dbReference>
<dbReference type="GO" id="GO:0008174">
    <property type="term" value="F:mRNA methyltransferase activity"/>
    <property type="evidence" value="ECO:0007669"/>
    <property type="project" value="InterPro"/>
</dbReference>
<dbReference type="GO" id="GO:0003723">
    <property type="term" value="F:RNA binding"/>
    <property type="evidence" value="ECO:0007669"/>
    <property type="project" value="InterPro"/>
</dbReference>
<dbReference type="GO" id="GO:0003724">
    <property type="term" value="F:RNA helicase activity"/>
    <property type="evidence" value="ECO:0007669"/>
    <property type="project" value="UniProtKB-EC"/>
</dbReference>
<dbReference type="GO" id="GO:0003968">
    <property type="term" value="F:RNA-directed RNA polymerase activity"/>
    <property type="evidence" value="ECO:0007669"/>
    <property type="project" value="UniProtKB-KW"/>
</dbReference>
<dbReference type="GO" id="GO:0006351">
    <property type="term" value="P:DNA-templated transcription"/>
    <property type="evidence" value="ECO:0007669"/>
    <property type="project" value="InterPro"/>
</dbReference>
<dbReference type="GO" id="GO:0016556">
    <property type="term" value="P:mRNA modification"/>
    <property type="evidence" value="ECO:0007669"/>
    <property type="project" value="InterPro"/>
</dbReference>
<dbReference type="GO" id="GO:0006396">
    <property type="term" value="P:RNA processing"/>
    <property type="evidence" value="ECO:0007669"/>
    <property type="project" value="InterPro"/>
</dbReference>
<dbReference type="GO" id="GO:0052170">
    <property type="term" value="P:symbiont-mediated suppression of host innate immune response"/>
    <property type="evidence" value="ECO:0007669"/>
    <property type="project" value="UniProtKB-KW"/>
</dbReference>
<dbReference type="GO" id="GO:0039694">
    <property type="term" value="P:viral RNA genome replication"/>
    <property type="evidence" value="ECO:0007669"/>
    <property type="project" value="InterPro"/>
</dbReference>
<dbReference type="CDD" id="cd23251">
    <property type="entry name" value="Virgaviridae_RdRp"/>
    <property type="match status" value="1"/>
</dbReference>
<dbReference type="Gene3D" id="3.30.450.420">
    <property type="match status" value="1"/>
</dbReference>
<dbReference type="Gene3D" id="3.40.50.300">
    <property type="entry name" value="P-loop containing nucleotide triphosphate hydrolases"/>
    <property type="match status" value="2"/>
</dbReference>
<dbReference type="InterPro" id="IPR027351">
    <property type="entry name" value="(+)RNA_virus_helicase_core_dom"/>
</dbReference>
<dbReference type="InterPro" id="IPR002588">
    <property type="entry name" value="Alphavirus-like_MT_dom"/>
</dbReference>
<dbReference type="InterPro" id="IPR043502">
    <property type="entry name" value="DNA/RNA_pol_sf"/>
</dbReference>
<dbReference type="InterPro" id="IPR027417">
    <property type="entry name" value="P-loop_NTPase"/>
</dbReference>
<dbReference type="InterPro" id="IPR001788">
    <property type="entry name" value="RNA-dep_RNA_pol_alsuvir"/>
</dbReference>
<dbReference type="InterPro" id="IPR007094">
    <property type="entry name" value="RNA-dir_pol_PSvirus"/>
</dbReference>
<dbReference type="InterPro" id="IPR049329">
    <property type="entry name" value="ToMV_Hel_N"/>
</dbReference>
<dbReference type="InterPro" id="IPR047310">
    <property type="entry name" value="Virgaviridae_RdRp"/>
</dbReference>
<dbReference type="Pfam" id="PF00978">
    <property type="entry name" value="RdRP_2"/>
    <property type="match status" value="1"/>
</dbReference>
<dbReference type="Pfam" id="PF20896">
    <property type="entry name" value="ToMV_Hel_N"/>
    <property type="match status" value="1"/>
</dbReference>
<dbReference type="Pfam" id="PF01443">
    <property type="entry name" value="Viral_helicase1"/>
    <property type="match status" value="1"/>
</dbReference>
<dbReference type="Pfam" id="PF01660">
    <property type="entry name" value="Vmethyltransf"/>
    <property type="match status" value="1"/>
</dbReference>
<dbReference type="SUPFAM" id="SSF56672">
    <property type="entry name" value="DNA/RNA polymerases"/>
    <property type="match status" value="1"/>
</dbReference>
<dbReference type="SUPFAM" id="SSF52540">
    <property type="entry name" value="P-loop containing nucleoside triphosphate hydrolases"/>
    <property type="match status" value="1"/>
</dbReference>
<dbReference type="PROSITE" id="PS51743">
    <property type="entry name" value="ALPHAVIRUS_MT"/>
    <property type="match status" value="1"/>
</dbReference>
<dbReference type="PROSITE" id="PS51657">
    <property type="entry name" value="PSRV_HELICASE"/>
    <property type="match status" value="1"/>
</dbReference>
<dbReference type="PROSITE" id="PS50507">
    <property type="entry name" value="RDRP_SSRNA_POS"/>
    <property type="match status" value="1"/>
</dbReference>
<sequence>MAHFQQTMNNKVIEAGMGRNSLINDLAQRRVYDNAVEELNHRSRRPKVNFSKVISQEQIIQATNAYPEFEITFYNTQLAVHSMAGGLRALELEYLMMQIPFGSITYDIGGNFSAHLYKGRDYVHCCMPNLDIRDVARHINQQDTVSTYLARLERSKRGLPVFQQSAFNKYMNDPDAVCCDKRFQDCSYSVDLPGKTYAVALHSIYDIPADEFGAALLRKDVHICYAAFHFSENLLLETTSAPLDEIGATFYKSGDRLSFFFQNESTLNYEHSYKNVIKYVCKTFFPASNRFVYHKEFMCTRVNTWFCKFTKVDTYFLFRGVYTRGEDSEQFYTAMDEAWEYKKTLAMLKCERTIFRDRAAVNFWFPKVKDMVIVPLFDGSVTSGKMKRSEVMVNKDFVYTVLNHIRTYQDKALTYKNVLSFVESIRSRVIINGVSARSEWDVDKSVLQALSMTFLLQTKLAEAKDQVVLKKFQKFDDTVTNLFWKQISDAVGDLFPSIKETLISGGFVKVAEQSLQIKTPDEYITFADKLVMEYKATEELQHLDISKPLERAEKYYNALSELSVLKECDEFDITQFKNLCEEKDIDPDVVAKVIVAIMKNELTLPFKNPTPEALSDALSPLPKDLDMRFDLLKLSTCAPFPSVKTLDSGLLPKQSYGDERQFESQSVVSVSDFHLKSVESVKMKSMSSAVYTGPLKVQQMKNYMDYLSASISATVSNLCKVLKDVYGADPESAEKSGVYDVVKGKWLLKPKGKCHAWGVAELNNGEKVIVLLEWADGFPICGDWRRVAVSSDSLIYSDMGKLQTLLSCLKDGEPVPSDAKVTLVDGVPGCGKTKEILETVNFDEDLILVPGKEACKMIIKRANKSGHVRATKDNVRTVDSFLMHLKPKTYNKLFIDEGLMLHTGCVNFLIALSHCREAMVFGDTEQIPFINRVANFPYPKHFATLVYDHREVRRLSLRCPADVTHFMNSKYDGKVLCTNDVIRSVDAEVVRGKGVFNPKSKPLKGKIITFTQSDKAELKERGYEEVSTFGEINTVHEIQGETFEDVSVVRLTPTPLELISKSSPHVLVALTRHTKSFKYYSVVLDPLVKVCSDLSKVSDFILDMYKVDAGILXQLQVGSIFKGENLFVPCPKSGYISDMQFYYDTLLPGNSTILNEYDAVTMNLRENNLNVKDCTIDFSKSVSVPRQQQEFFTPVIRTAAERPRSRGLLENLVAMIKRNFNSPDLTGILDIEDTAELVVNKFWDAYIIDELSGGNVTPMTSDAFHRWMAKQEKSTIGQLADFDFVDLPAIDQYKHMIKAQPKQKLDLSPQDEYAALQTIVYHSKQINAIFGPLFSELTRQLLERIDSSKFLFYTRKTPEQIEEFFSDLDSTVPMEVLELDISKYDKSQNEFHCAVEYLIWEKLGLNGFLEEVWKQGHRKTSLKDYTAGIKTCLWYQRKSGDVTTFIGNTVIIAACLASMIPMDKVIKAAFCGDDSMLYIPKGLDLPDIQSGANLMWNFEAKLYRKRYGYFCGRYIIHHDRGAIVYYDPVKLISKLGCKHIKSLDHLEEFRISLCDVSASLNNCAYYGQLNDAIAEVHKTAVNGSFAFCSIVKYLSDKNLFRTLFYNGSSTKG</sequence>
<name>RDRP_ORSVC</name>
<accession>P89659</accession>
<accession>O39640</accession>
<reference key="1">
    <citation type="journal article" date="1995" name="Microbiol. Immunol.">
        <title>The complete nucleotide sequence of odontoglossum ringspot virus (Cy-1 strain) genomic RNA.</title>
        <authorList>
            <person name="Ikegami M."/>
            <person name="Isomura Y."/>
            <person name="Matsumoto Y."/>
            <person name="Chatani M."/>
            <person name="Inouye N."/>
        </authorList>
    </citation>
    <scope>NUCLEOTIDE SEQUENCE [GENOMIC RNA]</scope>
</reference>
<proteinExistence type="inferred from homology"/>
<organism>
    <name type="scientific">Odontoglossum ringspot virus (isolate Korean Cy)</name>
    <name type="common">ORSV-Cy</name>
    <dbReference type="NCBI Taxonomy" id="138661"/>
    <lineage>
        <taxon>Viruses</taxon>
        <taxon>Riboviria</taxon>
        <taxon>Orthornavirae</taxon>
        <taxon>Kitrinoviricota</taxon>
        <taxon>Alsuviricetes</taxon>
        <taxon>Martellivirales</taxon>
        <taxon>Virgaviridae</taxon>
        <taxon>Tobamovirus</taxon>
        <taxon>Odontoglossum ringspot virus</taxon>
    </lineage>
</organism>
<keyword id="KW-0067">ATP-binding</keyword>
<keyword id="KW-0347">Helicase</keyword>
<keyword id="KW-0945">Host-virus interaction</keyword>
<keyword id="KW-0378">Hydrolase</keyword>
<keyword id="KW-1090">Inhibition of host innate immune response by virus</keyword>
<keyword id="KW-0547">Nucleotide-binding</keyword>
<keyword id="KW-0548">Nucleotidyltransferase</keyword>
<keyword id="KW-1159">RNA suppression of termination</keyword>
<keyword id="KW-0696">RNA-directed RNA polymerase</keyword>
<keyword id="KW-0941">Suppressor of RNA silencing</keyword>
<keyword id="KW-0808">Transferase</keyword>
<keyword id="KW-0899">Viral immunoevasion</keyword>
<keyword id="KW-0693">Viral RNA replication</keyword>
<evidence type="ECO:0000250" key="1"/>
<evidence type="ECO:0000255" key="2"/>
<evidence type="ECO:0000255" key="3">
    <source>
        <dbReference type="PROSITE-ProRule" id="PRU00539"/>
    </source>
</evidence>
<evidence type="ECO:0000255" key="4">
    <source>
        <dbReference type="PROSITE-ProRule" id="PRU01079"/>
    </source>
</evidence>
<evidence type="ECO:0000305" key="5"/>
<protein>
    <recommendedName>
        <fullName>Replicase large subunit</fullName>
        <ecNumber>2.1.1.-</ecNumber>
        <ecNumber>2.7.7.-</ecNumber>
        <ecNumber>2.7.7.48</ecNumber>
        <ecNumber>3.6.4.13</ecNumber>
    </recommendedName>
    <alternativeName>
        <fullName>183 kDa protein</fullName>
    </alternativeName>
    <alternativeName>
        <fullName>RNA-directed RNA polymerase</fullName>
    </alternativeName>
    <component>
        <recommendedName>
            <fullName>Replicase small subunit</fullName>
            <ecNumber>2.1.1.-</ecNumber>
            <ecNumber>2.7.7.-</ecNumber>
            <ecNumber>3.6.4.13</ecNumber>
        </recommendedName>
        <alternativeName>
            <fullName>126 kDa protein</fullName>
        </alternativeName>
        <alternativeName>
            <fullName>Methyltransferase/RNA helicase</fullName>
            <shortName>MT/HEL</shortName>
        </alternativeName>
    </component>
</protein>
<feature type="chain" id="PRO_0000041176" description="Replicase large subunit">
    <location>
        <begin position="1"/>
        <end position="1612"/>
    </location>
</feature>
<feature type="chain" id="PRO_0000041177" description="Replicase small subunit">
    <location>
        <begin position="1"/>
        <end position="1112"/>
    </location>
</feature>
<feature type="domain" description="Alphavirus-like MT" evidence="4">
    <location>
        <begin position="72"/>
        <end position="280"/>
    </location>
</feature>
<feature type="domain" description="(+)RNA virus helicase ATP-binding">
    <location>
        <begin position="794"/>
        <end position="953"/>
    </location>
</feature>
<feature type="domain" description="(+)RNA virus helicase C-terminal">
    <location>
        <begin position="954"/>
        <end position="1112"/>
    </location>
</feature>
<feature type="domain" description="RdRp catalytic" evidence="3">
    <location>
        <begin position="1374"/>
        <end position="1487"/>
    </location>
</feature>
<feature type="region of interest" description="Methyltransferase">
    <location>
        <begin position="50"/>
        <end position="452"/>
    </location>
</feature>
<feature type="region of interest" description="Helicase">
    <location>
        <begin position="822"/>
        <end position="1080"/>
    </location>
</feature>
<feature type="binding site" evidence="2">
    <location>
        <begin position="826"/>
        <end position="833"/>
    </location>
    <ligand>
        <name>ATP</name>
        <dbReference type="ChEBI" id="CHEBI:30616"/>
    </ligand>
</feature>